<reference key="1">
    <citation type="journal article" date="2002" name="Nature">
        <title>The genome sequence of Schizosaccharomyces pombe.</title>
        <authorList>
            <person name="Wood V."/>
            <person name="Gwilliam R."/>
            <person name="Rajandream M.A."/>
            <person name="Lyne M.H."/>
            <person name="Lyne R."/>
            <person name="Stewart A."/>
            <person name="Sgouros J.G."/>
            <person name="Peat N."/>
            <person name="Hayles J."/>
            <person name="Baker S.G."/>
            <person name="Basham D."/>
            <person name="Bowman S."/>
            <person name="Brooks K."/>
            <person name="Brown D."/>
            <person name="Brown S."/>
            <person name="Chillingworth T."/>
            <person name="Churcher C.M."/>
            <person name="Collins M."/>
            <person name="Connor R."/>
            <person name="Cronin A."/>
            <person name="Davis P."/>
            <person name="Feltwell T."/>
            <person name="Fraser A."/>
            <person name="Gentles S."/>
            <person name="Goble A."/>
            <person name="Hamlin N."/>
            <person name="Harris D.E."/>
            <person name="Hidalgo J."/>
            <person name="Hodgson G."/>
            <person name="Holroyd S."/>
            <person name="Hornsby T."/>
            <person name="Howarth S."/>
            <person name="Huckle E.J."/>
            <person name="Hunt S."/>
            <person name="Jagels K."/>
            <person name="James K.D."/>
            <person name="Jones L."/>
            <person name="Jones M."/>
            <person name="Leather S."/>
            <person name="McDonald S."/>
            <person name="McLean J."/>
            <person name="Mooney P."/>
            <person name="Moule S."/>
            <person name="Mungall K.L."/>
            <person name="Murphy L.D."/>
            <person name="Niblett D."/>
            <person name="Odell C."/>
            <person name="Oliver K."/>
            <person name="O'Neil S."/>
            <person name="Pearson D."/>
            <person name="Quail M.A."/>
            <person name="Rabbinowitsch E."/>
            <person name="Rutherford K.M."/>
            <person name="Rutter S."/>
            <person name="Saunders D."/>
            <person name="Seeger K."/>
            <person name="Sharp S."/>
            <person name="Skelton J."/>
            <person name="Simmonds M.N."/>
            <person name="Squares R."/>
            <person name="Squares S."/>
            <person name="Stevens K."/>
            <person name="Taylor K."/>
            <person name="Taylor R.G."/>
            <person name="Tivey A."/>
            <person name="Walsh S.V."/>
            <person name="Warren T."/>
            <person name="Whitehead S."/>
            <person name="Woodward J.R."/>
            <person name="Volckaert G."/>
            <person name="Aert R."/>
            <person name="Robben J."/>
            <person name="Grymonprez B."/>
            <person name="Weltjens I."/>
            <person name="Vanstreels E."/>
            <person name="Rieger M."/>
            <person name="Schaefer M."/>
            <person name="Mueller-Auer S."/>
            <person name="Gabel C."/>
            <person name="Fuchs M."/>
            <person name="Duesterhoeft A."/>
            <person name="Fritzc C."/>
            <person name="Holzer E."/>
            <person name="Moestl D."/>
            <person name="Hilbert H."/>
            <person name="Borzym K."/>
            <person name="Langer I."/>
            <person name="Beck A."/>
            <person name="Lehrach H."/>
            <person name="Reinhardt R."/>
            <person name="Pohl T.M."/>
            <person name="Eger P."/>
            <person name="Zimmermann W."/>
            <person name="Wedler H."/>
            <person name="Wambutt R."/>
            <person name="Purnelle B."/>
            <person name="Goffeau A."/>
            <person name="Cadieu E."/>
            <person name="Dreano S."/>
            <person name="Gloux S."/>
            <person name="Lelaure V."/>
            <person name="Mottier S."/>
            <person name="Galibert F."/>
            <person name="Aves S.J."/>
            <person name="Xiang Z."/>
            <person name="Hunt C."/>
            <person name="Moore K."/>
            <person name="Hurst S.M."/>
            <person name="Lucas M."/>
            <person name="Rochet M."/>
            <person name="Gaillardin C."/>
            <person name="Tallada V.A."/>
            <person name="Garzon A."/>
            <person name="Thode G."/>
            <person name="Daga R.R."/>
            <person name="Cruzado L."/>
            <person name="Jimenez J."/>
            <person name="Sanchez M."/>
            <person name="del Rey F."/>
            <person name="Benito J."/>
            <person name="Dominguez A."/>
            <person name="Revuelta J.L."/>
            <person name="Moreno S."/>
            <person name="Armstrong J."/>
            <person name="Forsburg S.L."/>
            <person name="Cerutti L."/>
            <person name="Lowe T."/>
            <person name="McCombie W.R."/>
            <person name="Paulsen I."/>
            <person name="Potashkin J."/>
            <person name="Shpakovski G.V."/>
            <person name="Ussery D."/>
            <person name="Barrell B.G."/>
            <person name="Nurse P."/>
        </authorList>
    </citation>
    <scope>NUCLEOTIDE SEQUENCE [LARGE SCALE GENOMIC DNA]</scope>
    <source>
        <strain>972 / ATCC 24843</strain>
    </source>
</reference>
<reference key="2">
    <citation type="journal article" date="2006" name="Nat. Biotechnol.">
        <title>ORFeome cloning and global analysis of protein localization in the fission yeast Schizosaccharomyces pombe.</title>
        <authorList>
            <person name="Matsuyama A."/>
            <person name="Arai R."/>
            <person name="Yashiroda Y."/>
            <person name="Shirai A."/>
            <person name="Kamata A."/>
            <person name="Sekido S."/>
            <person name="Kobayashi Y."/>
            <person name="Hashimoto A."/>
            <person name="Hamamoto M."/>
            <person name="Hiraoka Y."/>
            <person name="Horinouchi S."/>
            <person name="Yoshida M."/>
        </authorList>
    </citation>
    <scope>SUBCELLULAR LOCATION [LARGE SCALE ANALYSIS]</scope>
</reference>
<reference key="3">
    <citation type="journal article" date="2008" name="J. Proteome Res.">
        <title>Phosphoproteome analysis of fission yeast.</title>
        <authorList>
            <person name="Wilson-Grady J.T."/>
            <person name="Villen J."/>
            <person name="Gygi S.P."/>
        </authorList>
    </citation>
    <scope>PHOSPHORYLATION [LARGE SCALE ANALYSIS] AT THR-157</scope>
    <scope>IDENTIFICATION BY MASS SPECTROMETRY</scope>
</reference>
<protein>
    <recommendedName>
        <fullName evidence="5">Small ribosomal subunit protein uS7m</fullName>
    </recommendedName>
    <alternativeName>
        <fullName>37S ribosomal protein S7, mitochondrial</fullName>
    </alternativeName>
</protein>
<evidence type="ECO:0000250" key="1">
    <source>
        <dbReference type="UniProtKB" id="P47150"/>
    </source>
</evidence>
<evidence type="ECO:0000255" key="2"/>
<evidence type="ECO:0000269" key="3">
    <source>
    </source>
</evidence>
<evidence type="ECO:0000269" key="4">
    <source>
    </source>
</evidence>
<evidence type="ECO:0000305" key="5"/>
<proteinExistence type="evidence at protein level"/>
<keyword id="KW-0496">Mitochondrion</keyword>
<keyword id="KW-0597">Phosphoprotein</keyword>
<keyword id="KW-1185">Reference proteome</keyword>
<keyword id="KW-0687">Ribonucleoprotein</keyword>
<keyword id="KW-0689">Ribosomal protein</keyword>
<keyword id="KW-0809">Transit peptide</keyword>
<name>RT07_SCHPO</name>
<organism>
    <name type="scientific">Schizosaccharomyces pombe (strain 972 / ATCC 24843)</name>
    <name type="common">Fission yeast</name>
    <dbReference type="NCBI Taxonomy" id="284812"/>
    <lineage>
        <taxon>Eukaryota</taxon>
        <taxon>Fungi</taxon>
        <taxon>Dikarya</taxon>
        <taxon>Ascomycota</taxon>
        <taxon>Taphrinomycotina</taxon>
        <taxon>Schizosaccharomycetes</taxon>
        <taxon>Schizosaccharomycetales</taxon>
        <taxon>Schizosaccharomycetaceae</taxon>
        <taxon>Schizosaccharomyces</taxon>
    </lineage>
</organism>
<accession>O13744</accession>
<dbReference type="EMBL" id="CU329670">
    <property type="protein sequence ID" value="CAB11038.2"/>
    <property type="molecule type" value="Genomic_DNA"/>
</dbReference>
<dbReference type="PIR" id="T37790">
    <property type="entry name" value="T37790"/>
</dbReference>
<dbReference type="RefSeq" id="NP_594222.2">
    <property type="nucleotide sequence ID" value="NM_001019645.2"/>
</dbReference>
<dbReference type="SMR" id="O13744"/>
<dbReference type="BioGRID" id="278796">
    <property type="interactions" value="1"/>
</dbReference>
<dbReference type="ComplexPortal" id="CPX-10315">
    <property type="entry name" value="37S mitochondrial small ribosomal subunit"/>
</dbReference>
<dbReference type="FunCoup" id="O13744">
    <property type="interactions" value="238"/>
</dbReference>
<dbReference type="STRING" id="284812.O13744"/>
<dbReference type="iPTMnet" id="O13744"/>
<dbReference type="PaxDb" id="4896-SPAC16E8.10c.1"/>
<dbReference type="EnsemblFungi" id="SPAC16E8.10c.1">
    <property type="protein sequence ID" value="SPAC16E8.10c.1:pep"/>
    <property type="gene ID" value="SPAC16E8.10c"/>
</dbReference>
<dbReference type="GeneID" id="2542330"/>
<dbReference type="KEGG" id="spo:2542330"/>
<dbReference type="PomBase" id="SPAC16E8.10c">
    <property type="gene designation" value="rsm7"/>
</dbReference>
<dbReference type="VEuPathDB" id="FungiDB:SPAC16E8.10c"/>
<dbReference type="eggNOG" id="KOG3291">
    <property type="taxonomic scope" value="Eukaryota"/>
</dbReference>
<dbReference type="HOGENOM" id="CLU_094685_0_0_1"/>
<dbReference type="InParanoid" id="O13744"/>
<dbReference type="OMA" id="MCLVNRG"/>
<dbReference type="PhylomeDB" id="O13744"/>
<dbReference type="PRO" id="PR:O13744"/>
<dbReference type="Proteomes" id="UP000002485">
    <property type="component" value="Chromosome I"/>
</dbReference>
<dbReference type="GO" id="GO:0005763">
    <property type="term" value="C:mitochondrial small ribosomal subunit"/>
    <property type="evidence" value="ECO:0000318"/>
    <property type="project" value="GO_Central"/>
</dbReference>
<dbReference type="GO" id="GO:0005739">
    <property type="term" value="C:mitochondrion"/>
    <property type="evidence" value="ECO:0007005"/>
    <property type="project" value="PomBase"/>
</dbReference>
<dbReference type="GO" id="GO:0005840">
    <property type="term" value="C:ribosome"/>
    <property type="evidence" value="ECO:0000318"/>
    <property type="project" value="GO_Central"/>
</dbReference>
<dbReference type="GO" id="GO:0003729">
    <property type="term" value="F:mRNA binding"/>
    <property type="evidence" value="ECO:0000318"/>
    <property type="project" value="GO_Central"/>
</dbReference>
<dbReference type="GO" id="GO:0019843">
    <property type="term" value="F:rRNA binding"/>
    <property type="evidence" value="ECO:0000318"/>
    <property type="project" value="GO_Central"/>
</dbReference>
<dbReference type="GO" id="GO:0003735">
    <property type="term" value="F:structural constituent of ribosome"/>
    <property type="evidence" value="ECO:0000318"/>
    <property type="project" value="GO_Central"/>
</dbReference>
<dbReference type="GO" id="GO:0032543">
    <property type="term" value="P:mitochondrial translation"/>
    <property type="evidence" value="ECO:0000250"/>
    <property type="project" value="PomBase"/>
</dbReference>
<dbReference type="GO" id="GO:0000028">
    <property type="term" value="P:ribosomal small subunit assembly"/>
    <property type="evidence" value="ECO:0000318"/>
    <property type="project" value="GO_Central"/>
</dbReference>
<dbReference type="GO" id="GO:0006412">
    <property type="term" value="P:translation"/>
    <property type="evidence" value="ECO:0000318"/>
    <property type="project" value="GO_Central"/>
</dbReference>
<dbReference type="CDD" id="cd14868">
    <property type="entry name" value="uS7_Mitochondria_Fungi"/>
    <property type="match status" value="1"/>
</dbReference>
<dbReference type="Gene3D" id="1.10.455.10">
    <property type="entry name" value="Ribosomal protein S7 domain"/>
    <property type="match status" value="1"/>
</dbReference>
<dbReference type="InterPro" id="IPR000235">
    <property type="entry name" value="Ribosomal_uS7"/>
</dbReference>
<dbReference type="InterPro" id="IPR020606">
    <property type="entry name" value="Ribosomal_uS7_CS"/>
</dbReference>
<dbReference type="InterPro" id="IPR023798">
    <property type="entry name" value="Ribosomal_uS7_dom"/>
</dbReference>
<dbReference type="InterPro" id="IPR036823">
    <property type="entry name" value="Ribosomal_uS7_dom_sf"/>
</dbReference>
<dbReference type="InterPro" id="IPR047988">
    <property type="entry name" value="Ribosomal_uS7m_fungi"/>
</dbReference>
<dbReference type="PANTHER" id="PTHR11205">
    <property type="entry name" value="RIBOSOMAL PROTEIN S7"/>
    <property type="match status" value="1"/>
</dbReference>
<dbReference type="Pfam" id="PF00177">
    <property type="entry name" value="Ribosomal_S7"/>
    <property type="match status" value="1"/>
</dbReference>
<dbReference type="SUPFAM" id="SSF47973">
    <property type="entry name" value="Ribosomal protein S7"/>
    <property type="match status" value="1"/>
</dbReference>
<dbReference type="PROSITE" id="PS00052">
    <property type="entry name" value="RIBOSOMAL_S7"/>
    <property type="match status" value="1"/>
</dbReference>
<feature type="transit peptide" description="Mitochondrion" evidence="2">
    <location>
        <begin position="1"/>
        <end position="39"/>
    </location>
</feature>
<feature type="chain" id="PRO_0000310442" description="Small ribosomal subunit protein uS7m">
    <location>
        <begin position="40"/>
        <end position="259"/>
    </location>
</feature>
<feature type="modified residue" description="Phosphothreonine" evidence="4">
    <location>
        <position position="157"/>
    </location>
</feature>
<gene>
    <name type="primary">rsm7</name>
    <name type="ORF">SPAC16E8.10c</name>
</gene>
<comment type="function">
    <text evidence="1">Component of the mitochondrial ribosome (mitoribosome), a dedicated translation machinery responsible for the synthesis of mitochondrial genome-encoded proteins, including at least some of the essential transmembrane subunits of the mitochondrial respiratory chain. The mitoribosomes are attached to the mitochondrial inner membrane and translation products are cotranslationally integrated into the membrane.</text>
</comment>
<comment type="subunit">
    <text evidence="1">Component of the mitochondrial small ribosomal subunit (mt-SSU). Mature yeast 74S mitochondrial ribosomes consist of a small (37S) and a large (54S) subunit. The 37S small subunit contains a 15S ribosomal RNA (15S mt-rRNA) and at least 32 different proteins. The 54S large subunit contains a 21S rRNA (21S mt-rRNA) and at least 45 different proteins.</text>
</comment>
<comment type="subcellular location">
    <subcellularLocation>
        <location evidence="3">Mitochondrion</location>
    </subcellularLocation>
</comment>
<comment type="similarity">
    <text evidence="5">Belongs to the universal ribosomal protein uS7 family.</text>
</comment>
<sequence length="259" mass="29559">MLRLIKQPLFRCASSGHLMKESLVFIHQTRTFQVGKFTSNEKYNEKIEDINERSNPQWDNAGLENLLNQLQDSVEQSASDDFMGELEKKIEVENEEPPLMGTNLWPSPSSSIVGLIDRPFQVDSTVQHLVNLIMRDGKKAKAEKIVATALSIIQKETGENPIDVLKQAIAEISPLMKLVSAKRFNKSVEFPMPLKERQRRRIALQWILGECKSSSPKRLSDRIVKEIIAIRSKTSNCFKKKDHLHRMCLVNRGNAPVRI</sequence>